<feature type="chain" id="PRO_1000010560" description="Peptidyl-tRNA hydrolase">
    <location>
        <begin position="1"/>
        <end position="194"/>
    </location>
</feature>
<feature type="active site" description="Proton acceptor" evidence="1">
    <location>
        <position position="22"/>
    </location>
</feature>
<feature type="binding site" evidence="1">
    <location>
        <position position="17"/>
    </location>
    <ligand>
        <name>tRNA</name>
        <dbReference type="ChEBI" id="CHEBI:17843"/>
    </ligand>
</feature>
<feature type="binding site" evidence="1">
    <location>
        <position position="69"/>
    </location>
    <ligand>
        <name>tRNA</name>
        <dbReference type="ChEBI" id="CHEBI:17843"/>
    </ligand>
</feature>
<feature type="binding site" evidence="1">
    <location>
        <position position="71"/>
    </location>
    <ligand>
        <name>tRNA</name>
        <dbReference type="ChEBI" id="CHEBI:17843"/>
    </ligand>
</feature>
<feature type="binding site" evidence="1">
    <location>
        <position position="117"/>
    </location>
    <ligand>
        <name>tRNA</name>
        <dbReference type="ChEBI" id="CHEBI:17843"/>
    </ligand>
</feature>
<feature type="site" description="Discriminates between blocked and unblocked aminoacyl-tRNA" evidence="1">
    <location>
        <position position="12"/>
    </location>
</feature>
<feature type="site" description="Stabilizes the basic form of H active site to accept a proton" evidence="1">
    <location>
        <position position="96"/>
    </location>
</feature>
<organism>
    <name type="scientific">Arthrobacter sp. (strain FB24)</name>
    <dbReference type="NCBI Taxonomy" id="290399"/>
    <lineage>
        <taxon>Bacteria</taxon>
        <taxon>Bacillati</taxon>
        <taxon>Actinomycetota</taxon>
        <taxon>Actinomycetes</taxon>
        <taxon>Micrococcales</taxon>
        <taxon>Micrococcaceae</taxon>
        <taxon>Arthrobacter</taxon>
    </lineage>
</organism>
<protein>
    <recommendedName>
        <fullName evidence="1">Peptidyl-tRNA hydrolase</fullName>
        <shortName evidence="1">Pth</shortName>
        <ecNumber evidence="1">3.1.1.29</ecNumber>
    </recommendedName>
</protein>
<accession>A0JU94</accession>
<evidence type="ECO:0000255" key="1">
    <source>
        <dbReference type="HAMAP-Rule" id="MF_00083"/>
    </source>
</evidence>
<proteinExistence type="inferred from homology"/>
<gene>
    <name evidence="1" type="primary">pth</name>
    <name type="ordered locus">Arth_1220</name>
</gene>
<reference key="1">
    <citation type="journal article" date="2013" name="Stand. Genomic Sci.">
        <title>Complete genome sequence of Arthrobacter sp. strain FB24.</title>
        <authorList>
            <person name="Nakatsu C.H."/>
            <person name="Barabote R."/>
            <person name="Thompson S."/>
            <person name="Bruce D."/>
            <person name="Detter C."/>
            <person name="Brettin T."/>
            <person name="Han C."/>
            <person name="Beasley F."/>
            <person name="Chen W."/>
            <person name="Konopka A."/>
            <person name="Xie G."/>
        </authorList>
    </citation>
    <scope>NUCLEOTIDE SEQUENCE [LARGE SCALE GENOMIC DNA]</scope>
    <source>
        <strain>FB24</strain>
    </source>
</reference>
<dbReference type="EC" id="3.1.1.29" evidence="1"/>
<dbReference type="EMBL" id="CP000454">
    <property type="protein sequence ID" value="ABK02614.1"/>
    <property type="molecule type" value="Genomic_DNA"/>
</dbReference>
<dbReference type="RefSeq" id="WP_011691081.1">
    <property type="nucleotide sequence ID" value="NC_008541.1"/>
</dbReference>
<dbReference type="SMR" id="A0JU94"/>
<dbReference type="STRING" id="290399.Arth_1220"/>
<dbReference type="KEGG" id="art:Arth_1220"/>
<dbReference type="eggNOG" id="COG0193">
    <property type="taxonomic scope" value="Bacteria"/>
</dbReference>
<dbReference type="HOGENOM" id="CLU_062456_2_2_11"/>
<dbReference type="OrthoDB" id="9800507at2"/>
<dbReference type="Proteomes" id="UP000000754">
    <property type="component" value="Chromosome"/>
</dbReference>
<dbReference type="GO" id="GO:0005737">
    <property type="term" value="C:cytoplasm"/>
    <property type="evidence" value="ECO:0007669"/>
    <property type="project" value="UniProtKB-SubCell"/>
</dbReference>
<dbReference type="GO" id="GO:0004045">
    <property type="term" value="F:peptidyl-tRNA hydrolase activity"/>
    <property type="evidence" value="ECO:0007669"/>
    <property type="project" value="UniProtKB-UniRule"/>
</dbReference>
<dbReference type="GO" id="GO:0000049">
    <property type="term" value="F:tRNA binding"/>
    <property type="evidence" value="ECO:0007669"/>
    <property type="project" value="UniProtKB-UniRule"/>
</dbReference>
<dbReference type="GO" id="GO:0006515">
    <property type="term" value="P:protein quality control for misfolded or incompletely synthesized proteins"/>
    <property type="evidence" value="ECO:0007669"/>
    <property type="project" value="UniProtKB-UniRule"/>
</dbReference>
<dbReference type="GO" id="GO:0072344">
    <property type="term" value="P:rescue of stalled ribosome"/>
    <property type="evidence" value="ECO:0007669"/>
    <property type="project" value="UniProtKB-UniRule"/>
</dbReference>
<dbReference type="CDD" id="cd00462">
    <property type="entry name" value="PTH"/>
    <property type="match status" value="1"/>
</dbReference>
<dbReference type="FunFam" id="3.40.50.1470:FF:000001">
    <property type="entry name" value="Peptidyl-tRNA hydrolase"/>
    <property type="match status" value="1"/>
</dbReference>
<dbReference type="Gene3D" id="3.40.50.1470">
    <property type="entry name" value="Peptidyl-tRNA hydrolase"/>
    <property type="match status" value="1"/>
</dbReference>
<dbReference type="HAMAP" id="MF_00083">
    <property type="entry name" value="Pept_tRNA_hydro_bact"/>
    <property type="match status" value="1"/>
</dbReference>
<dbReference type="InterPro" id="IPR001328">
    <property type="entry name" value="Pept_tRNA_hydro"/>
</dbReference>
<dbReference type="InterPro" id="IPR018171">
    <property type="entry name" value="Pept_tRNA_hydro_CS"/>
</dbReference>
<dbReference type="InterPro" id="IPR036416">
    <property type="entry name" value="Pept_tRNA_hydro_sf"/>
</dbReference>
<dbReference type="NCBIfam" id="TIGR00447">
    <property type="entry name" value="pth"/>
    <property type="match status" value="1"/>
</dbReference>
<dbReference type="PANTHER" id="PTHR17224">
    <property type="entry name" value="PEPTIDYL-TRNA HYDROLASE"/>
    <property type="match status" value="1"/>
</dbReference>
<dbReference type="PANTHER" id="PTHR17224:SF1">
    <property type="entry name" value="PEPTIDYL-TRNA HYDROLASE"/>
    <property type="match status" value="1"/>
</dbReference>
<dbReference type="Pfam" id="PF01195">
    <property type="entry name" value="Pept_tRNA_hydro"/>
    <property type="match status" value="1"/>
</dbReference>
<dbReference type="SUPFAM" id="SSF53178">
    <property type="entry name" value="Peptidyl-tRNA hydrolase-like"/>
    <property type="match status" value="1"/>
</dbReference>
<dbReference type="PROSITE" id="PS01195">
    <property type="entry name" value="PEPT_TRNA_HYDROL_1"/>
    <property type="match status" value="1"/>
</dbReference>
<dbReference type="PROSITE" id="PS01196">
    <property type="entry name" value="PEPT_TRNA_HYDROL_2"/>
    <property type="match status" value="1"/>
</dbReference>
<sequence length="194" mass="20986">MTDTWLIVGLGNPGTEYSNNRHNVGQMVLDELARRVGGSFKVHKARAHVLEGRLGIGGPRVVLAKPMSYMNVSGGPVSALSKFYDIDPEHVVAVHDEIDIPFNTVKLKIGGGEGGHNGLRDISKALATKDYLRVRVGVGRPPGRMDTADFVLKDFATTEKKDLPFLLDDAADAVETVVREGLAAAQQKYHTAVQ</sequence>
<keyword id="KW-0963">Cytoplasm</keyword>
<keyword id="KW-0378">Hydrolase</keyword>
<keyword id="KW-1185">Reference proteome</keyword>
<keyword id="KW-0694">RNA-binding</keyword>
<keyword id="KW-0820">tRNA-binding</keyword>
<comment type="function">
    <text evidence="1">Hydrolyzes ribosome-free peptidyl-tRNAs (with 1 or more amino acids incorporated), which drop off the ribosome during protein synthesis, or as a result of ribosome stalling.</text>
</comment>
<comment type="function">
    <text evidence="1">Catalyzes the release of premature peptidyl moieties from peptidyl-tRNA molecules trapped in stalled 50S ribosomal subunits, and thus maintains levels of free tRNAs and 50S ribosomes.</text>
</comment>
<comment type="catalytic activity">
    <reaction evidence="1">
        <text>an N-acyl-L-alpha-aminoacyl-tRNA + H2O = an N-acyl-L-amino acid + a tRNA + H(+)</text>
        <dbReference type="Rhea" id="RHEA:54448"/>
        <dbReference type="Rhea" id="RHEA-COMP:10123"/>
        <dbReference type="Rhea" id="RHEA-COMP:13883"/>
        <dbReference type="ChEBI" id="CHEBI:15377"/>
        <dbReference type="ChEBI" id="CHEBI:15378"/>
        <dbReference type="ChEBI" id="CHEBI:59874"/>
        <dbReference type="ChEBI" id="CHEBI:78442"/>
        <dbReference type="ChEBI" id="CHEBI:138191"/>
        <dbReference type="EC" id="3.1.1.29"/>
    </reaction>
</comment>
<comment type="subunit">
    <text evidence="1">Monomer.</text>
</comment>
<comment type="subcellular location">
    <subcellularLocation>
        <location evidence="1">Cytoplasm</location>
    </subcellularLocation>
</comment>
<comment type="similarity">
    <text evidence="1">Belongs to the PTH family.</text>
</comment>
<name>PTH_ARTS2</name>